<name>NOP16_YARLI</name>
<evidence type="ECO:0000250" key="1"/>
<evidence type="ECO:0000256" key="2">
    <source>
        <dbReference type="SAM" id="MobiDB-lite"/>
    </source>
</evidence>
<evidence type="ECO:0000305" key="3"/>
<sequence>MPSGVRRRKMNRSSITKVTRKDKDNHKRIVVTGSDIIRQRWDKNLSMAQNYKKLGLATKTGSRKIRGLEEDLREKSLRLTIQQGKNPHDQELRDLMEQQEQEELEKSNLVVNERKIPKLGAGEAFIVRDDKGEVVEVIYGKDHQTGSDEEDEEEWTGFEDKPEEEETETIKILQERAKRAASNPHVQSDREQSWIEQLINKHGDDIDGMFWDKELNIYQQSRGDLKRRIKKWKQGNKRNQ</sequence>
<accession>Q6CE60</accession>
<reference key="1">
    <citation type="journal article" date="2004" name="Nature">
        <title>Genome evolution in yeasts.</title>
        <authorList>
            <person name="Dujon B."/>
            <person name="Sherman D."/>
            <person name="Fischer G."/>
            <person name="Durrens P."/>
            <person name="Casaregola S."/>
            <person name="Lafontaine I."/>
            <person name="de Montigny J."/>
            <person name="Marck C."/>
            <person name="Neuveglise C."/>
            <person name="Talla E."/>
            <person name="Goffard N."/>
            <person name="Frangeul L."/>
            <person name="Aigle M."/>
            <person name="Anthouard V."/>
            <person name="Babour A."/>
            <person name="Barbe V."/>
            <person name="Barnay S."/>
            <person name="Blanchin S."/>
            <person name="Beckerich J.-M."/>
            <person name="Beyne E."/>
            <person name="Bleykasten C."/>
            <person name="Boisrame A."/>
            <person name="Boyer J."/>
            <person name="Cattolico L."/>
            <person name="Confanioleri F."/>
            <person name="de Daruvar A."/>
            <person name="Despons L."/>
            <person name="Fabre E."/>
            <person name="Fairhead C."/>
            <person name="Ferry-Dumazet H."/>
            <person name="Groppi A."/>
            <person name="Hantraye F."/>
            <person name="Hennequin C."/>
            <person name="Jauniaux N."/>
            <person name="Joyet P."/>
            <person name="Kachouri R."/>
            <person name="Kerrest A."/>
            <person name="Koszul R."/>
            <person name="Lemaire M."/>
            <person name="Lesur I."/>
            <person name="Ma L."/>
            <person name="Muller H."/>
            <person name="Nicaud J.-M."/>
            <person name="Nikolski M."/>
            <person name="Oztas S."/>
            <person name="Ozier-Kalogeropoulos O."/>
            <person name="Pellenz S."/>
            <person name="Potier S."/>
            <person name="Richard G.-F."/>
            <person name="Straub M.-L."/>
            <person name="Suleau A."/>
            <person name="Swennen D."/>
            <person name="Tekaia F."/>
            <person name="Wesolowski-Louvel M."/>
            <person name="Westhof E."/>
            <person name="Wirth B."/>
            <person name="Zeniou-Meyer M."/>
            <person name="Zivanovic Y."/>
            <person name="Bolotin-Fukuhara M."/>
            <person name="Thierry A."/>
            <person name="Bouchier C."/>
            <person name="Caudron B."/>
            <person name="Scarpelli C."/>
            <person name="Gaillardin C."/>
            <person name="Weissenbach J."/>
            <person name="Wincker P."/>
            <person name="Souciet J.-L."/>
        </authorList>
    </citation>
    <scope>NUCLEOTIDE SEQUENCE [LARGE SCALE GENOMIC DNA]</scope>
    <source>
        <strain>CLIB 122 / E 150</strain>
    </source>
</reference>
<feature type="chain" id="PRO_0000320389" description="Nucleolar protein 16">
    <location>
        <begin position="1"/>
        <end position="240"/>
    </location>
</feature>
<feature type="region of interest" description="Disordered" evidence="2">
    <location>
        <begin position="1"/>
        <end position="26"/>
    </location>
</feature>
<feature type="region of interest" description="Disordered" evidence="2">
    <location>
        <begin position="143"/>
        <end position="166"/>
    </location>
</feature>
<feature type="compositionally biased region" description="Basic residues" evidence="2">
    <location>
        <begin position="1"/>
        <end position="11"/>
    </location>
</feature>
<feature type="compositionally biased region" description="Acidic residues" evidence="2">
    <location>
        <begin position="147"/>
        <end position="166"/>
    </location>
</feature>
<protein>
    <recommendedName>
        <fullName>Nucleolar protein 16</fullName>
    </recommendedName>
</protein>
<gene>
    <name type="primary">NOP16</name>
    <name type="ordered locus">YALI0B18326g</name>
</gene>
<comment type="function">
    <text evidence="1">Involved in the biogenesis of the 60S ribosomal subunit.</text>
</comment>
<comment type="subunit">
    <text evidence="1">Component of the pre-66S ribosomal particle.</text>
</comment>
<comment type="subcellular location">
    <subcellularLocation>
        <location evidence="1">Nucleus</location>
        <location evidence="1">Nucleolus</location>
    </subcellularLocation>
</comment>
<comment type="similarity">
    <text evidence="3">Belongs to the NOP16 family.</text>
</comment>
<organism>
    <name type="scientific">Yarrowia lipolytica (strain CLIB 122 / E 150)</name>
    <name type="common">Yeast</name>
    <name type="synonym">Candida lipolytica</name>
    <dbReference type="NCBI Taxonomy" id="284591"/>
    <lineage>
        <taxon>Eukaryota</taxon>
        <taxon>Fungi</taxon>
        <taxon>Dikarya</taxon>
        <taxon>Ascomycota</taxon>
        <taxon>Saccharomycotina</taxon>
        <taxon>Dipodascomycetes</taxon>
        <taxon>Dipodascales</taxon>
        <taxon>Dipodascales incertae sedis</taxon>
        <taxon>Yarrowia</taxon>
    </lineage>
</organism>
<dbReference type="EMBL" id="CR382128">
    <property type="protein sequence ID" value="CAG83305.2"/>
    <property type="molecule type" value="Genomic_DNA"/>
</dbReference>
<dbReference type="RefSeq" id="XP_501052.2">
    <property type="nucleotide sequence ID" value="XM_501052.2"/>
</dbReference>
<dbReference type="SMR" id="Q6CE60"/>
<dbReference type="FunCoup" id="Q6CE60">
    <property type="interactions" value="289"/>
</dbReference>
<dbReference type="STRING" id="284591.Q6CE60"/>
<dbReference type="EnsemblFungi" id="CAG83305">
    <property type="protein sequence ID" value="CAG83305"/>
    <property type="gene ID" value="YALI0_B18326g"/>
</dbReference>
<dbReference type="KEGG" id="yli:2907556"/>
<dbReference type="VEuPathDB" id="FungiDB:YALI0_B18326g"/>
<dbReference type="HOGENOM" id="CLU_078857_0_0_1"/>
<dbReference type="InParanoid" id="Q6CE60"/>
<dbReference type="OMA" id="MQQTEAD"/>
<dbReference type="OrthoDB" id="119802at4891"/>
<dbReference type="Proteomes" id="UP000001300">
    <property type="component" value="Chromosome B"/>
</dbReference>
<dbReference type="GO" id="GO:0005730">
    <property type="term" value="C:nucleolus"/>
    <property type="evidence" value="ECO:0000318"/>
    <property type="project" value="GO_Central"/>
</dbReference>
<dbReference type="GO" id="GO:1990904">
    <property type="term" value="C:ribonucleoprotein complex"/>
    <property type="evidence" value="ECO:0007669"/>
    <property type="project" value="UniProtKB-KW"/>
</dbReference>
<dbReference type="GO" id="GO:0042273">
    <property type="term" value="P:ribosomal large subunit biogenesis"/>
    <property type="evidence" value="ECO:0000318"/>
    <property type="project" value="GO_Central"/>
</dbReference>
<dbReference type="GO" id="GO:0006364">
    <property type="term" value="P:rRNA processing"/>
    <property type="evidence" value="ECO:0007669"/>
    <property type="project" value="UniProtKB-KW"/>
</dbReference>
<dbReference type="InterPro" id="IPR019002">
    <property type="entry name" value="Ribosome_biogenesis_Nop16"/>
</dbReference>
<dbReference type="PANTHER" id="PTHR13243">
    <property type="entry name" value="HSPC111 PROTEIN-RELATED"/>
    <property type="match status" value="1"/>
</dbReference>
<dbReference type="PANTHER" id="PTHR13243:SF1">
    <property type="entry name" value="NUCLEOLAR PROTEIN 16"/>
    <property type="match status" value="1"/>
</dbReference>
<dbReference type="Pfam" id="PF09420">
    <property type="entry name" value="Nop16"/>
    <property type="match status" value="1"/>
</dbReference>
<keyword id="KW-0539">Nucleus</keyword>
<keyword id="KW-1185">Reference proteome</keyword>
<keyword id="KW-0687">Ribonucleoprotein</keyword>
<keyword id="KW-0690">Ribosome biogenesis</keyword>
<keyword id="KW-0698">rRNA processing</keyword>
<proteinExistence type="inferred from homology"/>